<evidence type="ECO:0000255" key="1">
    <source>
        <dbReference type="HAMAP-Rule" id="MF_00281"/>
    </source>
</evidence>
<reference key="1">
    <citation type="journal article" date="2003" name="Science">
        <title>Role of mobile DNA in the evolution of vancomycin-resistant Enterococcus faecalis.</title>
        <authorList>
            <person name="Paulsen I.T."/>
            <person name="Banerjei L."/>
            <person name="Myers G.S.A."/>
            <person name="Nelson K.E."/>
            <person name="Seshadri R."/>
            <person name="Read T.D."/>
            <person name="Fouts D.E."/>
            <person name="Eisen J.A."/>
            <person name="Gill S.R."/>
            <person name="Heidelberg J.F."/>
            <person name="Tettelin H."/>
            <person name="Dodson R.J."/>
            <person name="Umayam L.A."/>
            <person name="Brinkac L.M."/>
            <person name="Beanan M.J."/>
            <person name="Daugherty S.C."/>
            <person name="DeBoy R.T."/>
            <person name="Durkin S.A."/>
            <person name="Kolonay J.F."/>
            <person name="Madupu R."/>
            <person name="Nelson W.C."/>
            <person name="Vamathevan J.J."/>
            <person name="Tran B."/>
            <person name="Upton J."/>
            <person name="Hansen T."/>
            <person name="Shetty J."/>
            <person name="Khouri H.M."/>
            <person name="Utterback T.R."/>
            <person name="Radune D."/>
            <person name="Ketchum K.A."/>
            <person name="Dougherty B.A."/>
            <person name="Fraser C.M."/>
        </authorList>
    </citation>
    <scope>NUCLEOTIDE SEQUENCE [LARGE SCALE GENOMIC DNA]</scope>
    <source>
        <strain>ATCC 700802 / V583</strain>
    </source>
</reference>
<dbReference type="EC" id="6.1.1.20" evidence="1"/>
<dbReference type="EMBL" id="AE016830">
    <property type="protein sequence ID" value="AAO80915.1"/>
    <property type="molecule type" value="Genomic_DNA"/>
</dbReference>
<dbReference type="RefSeq" id="NP_814845.1">
    <property type="nucleotide sequence ID" value="NC_004668.1"/>
</dbReference>
<dbReference type="RefSeq" id="WP_002358034.1">
    <property type="nucleotide sequence ID" value="NZ_KE136528.1"/>
</dbReference>
<dbReference type="SMR" id="Q836J6"/>
<dbReference type="STRING" id="226185.EF_1115"/>
<dbReference type="EnsemblBacteria" id="AAO80915">
    <property type="protein sequence ID" value="AAO80915"/>
    <property type="gene ID" value="EF_1115"/>
</dbReference>
<dbReference type="GeneID" id="60893510"/>
<dbReference type="KEGG" id="efa:EF1115"/>
<dbReference type="PATRIC" id="fig|226185.45.peg.2380"/>
<dbReference type="eggNOG" id="COG0016">
    <property type="taxonomic scope" value="Bacteria"/>
</dbReference>
<dbReference type="HOGENOM" id="CLU_025086_0_1_9"/>
<dbReference type="Proteomes" id="UP000001415">
    <property type="component" value="Chromosome"/>
</dbReference>
<dbReference type="GO" id="GO:0005737">
    <property type="term" value="C:cytoplasm"/>
    <property type="evidence" value="ECO:0007669"/>
    <property type="project" value="UniProtKB-SubCell"/>
</dbReference>
<dbReference type="GO" id="GO:0005524">
    <property type="term" value="F:ATP binding"/>
    <property type="evidence" value="ECO:0007669"/>
    <property type="project" value="UniProtKB-UniRule"/>
</dbReference>
<dbReference type="GO" id="GO:0140096">
    <property type="term" value="F:catalytic activity, acting on a protein"/>
    <property type="evidence" value="ECO:0007669"/>
    <property type="project" value="UniProtKB-ARBA"/>
</dbReference>
<dbReference type="GO" id="GO:0000287">
    <property type="term" value="F:magnesium ion binding"/>
    <property type="evidence" value="ECO:0007669"/>
    <property type="project" value="UniProtKB-UniRule"/>
</dbReference>
<dbReference type="GO" id="GO:0004826">
    <property type="term" value="F:phenylalanine-tRNA ligase activity"/>
    <property type="evidence" value="ECO:0007669"/>
    <property type="project" value="UniProtKB-UniRule"/>
</dbReference>
<dbReference type="GO" id="GO:0016740">
    <property type="term" value="F:transferase activity"/>
    <property type="evidence" value="ECO:0007669"/>
    <property type="project" value="UniProtKB-ARBA"/>
</dbReference>
<dbReference type="GO" id="GO:0000049">
    <property type="term" value="F:tRNA binding"/>
    <property type="evidence" value="ECO:0007669"/>
    <property type="project" value="InterPro"/>
</dbReference>
<dbReference type="GO" id="GO:0006432">
    <property type="term" value="P:phenylalanyl-tRNA aminoacylation"/>
    <property type="evidence" value="ECO:0007669"/>
    <property type="project" value="UniProtKB-UniRule"/>
</dbReference>
<dbReference type="CDD" id="cd00496">
    <property type="entry name" value="PheRS_alpha_core"/>
    <property type="match status" value="1"/>
</dbReference>
<dbReference type="FunFam" id="3.30.930.10:FF:000003">
    <property type="entry name" value="Phenylalanine--tRNA ligase alpha subunit"/>
    <property type="match status" value="1"/>
</dbReference>
<dbReference type="Gene3D" id="3.30.930.10">
    <property type="entry name" value="Bira Bifunctional Protein, Domain 2"/>
    <property type="match status" value="1"/>
</dbReference>
<dbReference type="HAMAP" id="MF_00281">
    <property type="entry name" value="Phe_tRNA_synth_alpha1"/>
    <property type="match status" value="1"/>
</dbReference>
<dbReference type="InterPro" id="IPR006195">
    <property type="entry name" value="aa-tRNA-synth_II"/>
</dbReference>
<dbReference type="InterPro" id="IPR045864">
    <property type="entry name" value="aa-tRNA-synth_II/BPL/LPL"/>
</dbReference>
<dbReference type="InterPro" id="IPR004529">
    <property type="entry name" value="Phe-tRNA-synth_IIc_asu"/>
</dbReference>
<dbReference type="InterPro" id="IPR004188">
    <property type="entry name" value="Phe-tRNA_ligase_II_N"/>
</dbReference>
<dbReference type="InterPro" id="IPR022911">
    <property type="entry name" value="Phe_tRNA_ligase_alpha1_bac"/>
</dbReference>
<dbReference type="InterPro" id="IPR002319">
    <property type="entry name" value="Phenylalanyl-tRNA_Synthase"/>
</dbReference>
<dbReference type="InterPro" id="IPR010978">
    <property type="entry name" value="tRNA-bd_arm"/>
</dbReference>
<dbReference type="NCBIfam" id="TIGR00468">
    <property type="entry name" value="pheS"/>
    <property type="match status" value="1"/>
</dbReference>
<dbReference type="PANTHER" id="PTHR11538:SF41">
    <property type="entry name" value="PHENYLALANINE--TRNA LIGASE, MITOCHONDRIAL"/>
    <property type="match status" value="1"/>
</dbReference>
<dbReference type="PANTHER" id="PTHR11538">
    <property type="entry name" value="PHENYLALANYL-TRNA SYNTHETASE"/>
    <property type="match status" value="1"/>
</dbReference>
<dbReference type="Pfam" id="PF02912">
    <property type="entry name" value="Phe_tRNA-synt_N"/>
    <property type="match status" value="1"/>
</dbReference>
<dbReference type="Pfam" id="PF01409">
    <property type="entry name" value="tRNA-synt_2d"/>
    <property type="match status" value="1"/>
</dbReference>
<dbReference type="SUPFAM" id="SSF55681">
    <property type="entry name" value="Class II aaRS and biotin synthetases"/>
    <property type="match status" value="1"/>
</dbReference>
<dbReference type="SUPFAM" id="SSF46589">
    <property type="entry name" value="tRNA-binding arm"/>
    <property type="match status" value="1"/>
</dbReference>
<dbReference type="PROSITE" id="PS50862">
    <property type="entry name" value="AA_TRNA_LIGASE_II"/>
    <property type="match status" value="1"/>
</dbReference>
<accession>Q836J6</accession>
<keyword id="KW-0030">Aminoacyl-tRNA synthetase</keyword>
<keyword id="KW-0067">ATP-binding</keyword>
<keyword id="KW-0963">Cytoplasm</keyword>
<keyword id="KW-0436">Ligase</keyword>
<keyword id="KW-0460">Magnesium</keyword>
<keyword id="KW-0479">Metal-binding</keyword>
<keyword id="KW-0547">Nucleotide-binding</keyword>
<keyword id="KW-0648">Protein biosynthesis</keyword>
<keyword id="KW-1185">Reference proteome</keyword>
<sequence>MTLQAQLEALRDNTLKEIAQVATLKELNQIRVETLGKKGPITEVLRGMKNLSPEERPVVGGFANEIRDLLTEAIEARKVVLENEALNAALKEESLDVTLPGKQMPQGTRHILTQVMEEIEDIFLGMGYQVVEGYEVESDHYNFERMNLPKDHPARDMQDTFYISDEMLIRTHTSPVQARTMEKHDFSKGALRMISPGKVFRRDTDDATHSHQFHQIEGLVVDKNVTMGDLKGTLEVMMKKMFGEDRKIRLRPSYFPFTEPSVEVDVSCFKCGGAGCNVCKHTGWIEILGAGMVHPDVLQMSGIDPTEYSGFAFGLGPDRVAMLRYGVNDIRNFYQNDLRFLNQFKVKE</sequence>
<organism>
    <name type="scientific">Enterococcus faecalis (strain ATCC 700802 / V583)</name>
    <dbReference type="NCBI Taxonomy" id="226185"/>
    <lineage>
        <taxon>Bacteria</taxon>
        <taxon>Bacillati</taxon>
        <taxon>Bacillota</taxon>
        <taxon>Bacilli</taxon>
        <taxon>Lactobacillales</taxon>
        <taxon>Enterococcaceae</taxon>
        <taxon>Enterococcus</taxon>
    </lineage>
</organism>
<name>SYFA_ENTFA</name>
<comment type="catalytic activity">
    <reaction evidence="1">
        <text>tRNA(Phe) + L-phenylalanine + ATP = L-phenylalanyl-tRNA(Phe) + AMP + diphosphate + H(+)</text>
        <dbReference type="Rhea" id="RHEA:19413"/>
        <dbReference type="Rhea" id="RHEA-COMP:9668"/>
        <dbReference type="Rhea" id="RHEA-COMP:9699"/>
        <dbReference type="ChEBI" id="CHEBI:15378"/>
        <dbReference type="ChEBI" id="CHEBI:30616"/>
        <dbReference type="ChEBI" id="CHEBI:33019"/>
        <dbReference type="ChEBI" id="CHEBI:58095"/>
        <dbReference type="ChEBI" id="CHEBI:78442"/>
        <dbReference type="ChEBI" id="CHEBI:78531"/>
        <dbReference type="ChEBI" id="CHEBI:456215"/>
        <dbReference type="EC" id="6.1.1.20"/>
    </reaction>
</comment>
<comment type="cofactor">
    <cofactor evidence="1">
        <name>Mg(2+)</name>
        <dbReference type="ChEBI" id="CHEBI:18420"/>
    </cofactor>
    <text evidence="1">Binds 2 magnesium ions per tetramer.</text>
</comment>
<comment type="subunit">
    <text evidence="1">Tetramer of two alpha and two beta subunits.</text>
</comment>
<comment type="subcellular location">
    <subcellularLocation>
        <location evidence="1">Cytoplasm</location>
    </subcellularLocation>
</comment>
<comment type="similarity">
    <text evidence="1">Belongs to the class-II aminoacyl-tRNA synthetase family. Phe-tRNA synthetase alpha subunit type 1 subfamily.</text>
</comment>
<protein>
    <recommendedName>
        <fullName evidence="1">Phenylalanine--tRNA ligase alpha subunit</fullName>
        <ecNumber evidence="1">6.1.1.20</ecNumber>
    </recommendedName>
    <alternativeName>
        <fullName evidence="1">Phenylalanyl-tRNA synthetase alpha subunit</fullName>
        <shortName evidence="1">PheRS</shortName>
    </alternativeName>
</protein>
<feature type="chain" id="PRO_0000126704" description="Phenylalanine--tRNA ligase alpha subunit">
    <location>
        <begin position="1"/>
        <end position="348"/>
    </location>
</feature>
<feature type="binding site" evidence="1">
    <location>
        <position position="259"/>
    </location>
    <ligand>
        <name>Mg(2+)</name>
        <dbReference type="ChEBI" id="CHEBI:18420"/>
        <note>shared with beta subunit</note>
    </ligand>
</feature>
<proteinExistence type="inferred from homology"/>
<gene>
    <name evidence="1" type="primary">pheS</name>
    <name type="ordered locus">EF_1115</name>
</gene>